<feature type="chain" id="PRO_0000242041" description="Arginine--tRNA ligase">
    <location>
        <begin position="1"/>
        <end position="576"/>
    </location>
</feature>
<feature type="short sequence motif" description="'HIGH' region">
    <location>
        <begin position="122"/>
        <end position="132"/>
    </location>
</feature>
<gene>
    <name evidence="1" type="primary">argS</name>
    <name type="ordered locus">MS1330</name>
</gene>
<name>SYR_MANSM</name>
<protein>
    <recommendedName>
        <fullName evidence="1">Arginine--tRNA ligase</fullName>
        <ecNumber evidence="1">6.1.1.19</ecNumber>
    </recommendedName>
    <alternativeName>
        <fullName evidence="1">Arginyl-tRNA synthetase</fullName>
        <shortName evidence="1">ArgRS</shortName>
    </alternativeName>
</protein>
<dbReference type="EC" id="6.1.1.19" evidence="1"/>
<dbReference type="EMBL" id="AE016827">
    <property type="protein sequence ID" value="AAU37937.1"/>
    <property type="molecule type" value="Genomic_DNA"/>
</dbReference>
<dbReference type="RefSeq" id="WP_011200504.1">
    <property type="nucleotide sequence ID" value="NC_006300.1"/>
</dbReference>
<dbReference type="SMR" id="Q65SX3"/>
<dbReference type="STRING" id="221988.MS1330"/>
<dbReference type="KEGG" id="msu:MS1330"/>
<dbReference type="eggNOG" id="COG0018">
    <property type="taxonomic scope" value="Bacteria"/>
</dbReference>
<dbReference type="HOGENOM" id="CLU_006406_5_1_6"/>
<dbReference type="OrthoDB" id="9803211at2"/>
<dbReference type="Proteomes" id="UP000000607">
    <property type="component" value="Chromosome"/>
</dbReference>
<dbReference type="GO" id="GO:0005737">
    <property type="term" value="C:cytoplasm"/>
    <property type="evidence" value="ECO:0007669"/>
    <property type="project" value="UniProtKB-SubCell"/>
</dbReference>
<dbReference type="GO" id="GO:0004814">
    <property type="term" value="F:arginine-tRNA ligase activity"/>
    <property type="evidence" value="ECO:0007669"/>
    <property type="project" value="UniProtKB-UniRule"/>
</dbReference>
<dbReference type="GO" id="GO:0005524">
    <property type="term" value="F:ATP binding"/>
    <property type="evidence" value="ECO:0007669"/>
    <property type="project" value="UniProtKB-UniRule"/>
</dbReference>
<dbReference type="GO" id="GO:0006420">
    <property type="term" value="P:arginyl-tRNA aminoacylation"/>
    <property type="evidence" value="ECO:0007669"/>
    <property type="project" value="UniProtKB-UniRule"/>
</dbReference>
<dbReference type="CDD" id="cd07956">
    <property type="entry name" value="Anticodon_Ia_Arg"/>
    <property type="match status" value="1"/>
</dbReference>
<dbReference type="CDD" id="cd00671">
    <property type="entry name" value="ArgRS_core"/>
    <property type="match status" value="1"/>
</dbReference>
<dbReference type="FunFam" id="1.10.730.10:FF:000001">
    <property type="entry name" value="Arginine--tRNA ligase"/>
    <property type="match status" value="1"/>
</dbReference>
<dbReference type="FunFam" id="3.40.50.620:FF:000030">
    <property type="entry name" value="Arginine--tRNA ligase"/>
    <property type="match status" value="1"/>
</dbReference>
<dbReference type="Gene3D" id="3.30.1360.70">
    <property type="entry name" value="Arginyl tRNA synthetase N-terminal domain"/>
    <property type="match status" value="1"/>
</dbReference>
<dbReference type="Gene3D" id="3.40.50.620">
    <property type="entry name" value="HUPs"/>
    <property type="match status" value="1"/>
</dbReference>
<dbReference type="Gene3D" id="1.10.730.10">
    <property type="entry name" value="Isoleucyl-tRNA Synthetase, Domain 1"/>
    <property type="match status" value="1"/>
</dbReference>
<dbReference type="HAMAP" id="MF_00123">
    <property type="entry name" value="Arg_tRNA_synth"/>
    <property type="match status" value="1"/>
</dbReference>
<dbReference type="InterPro" id="IPR001412">
    <property type="entry name" value="aa-tRNA-synth_I_CS"/>
</dbReference>
<dbReference type="InterPro" id="IPR001278">
    <property type="entry name" value="Arg-tRNA-ligase"/>
</dbReference>
<dbReference type="InterPro" id="IPR005148">
    <property type="entry name" value="Arg-tRNA-synth_N"/>
</dbReference>
<dbReference type="InterPro" id="IPR036695">
    <property type="entry name" value="Arg-tRNA-synth_N_sf"/>
</dbReference>
<dbReference type="InterPro" id="IPR035684">
    <property type="entry name" value="ArgRS_core"/>
</dbReference>
<dbReference type="InterPro" id="IPR008909">
    <property type="entry name" value="DALR_anticod-bd"/>
</dbReference>
<dbReference type="InterPro" id="IPR014729">
    <property type="entry name" value="Rossmann-like_a/b/a_fold"/>
</dbReference>
<dbReference type="InterPro" id="IPR009080">
    <property type="entry name" value="tRNAsynth_Ia_anticodon-bd"/>
</dbReference>
<dbReference type="NCBIfam" id="TIGR00456">
    <property type="entry name" value="argS"/>
    <property type="match status" value="1"/>
</dbReference>
<dbReference type="PANTHER" id="PTHR11956:SF5">
    <property type="entry name" value="ARGININE--TRNA LIGASE, CYTOPLASMIC"/>
    <property type="match status" value="1"/>
</dbReference>
<dbReference type="PANTHER" id="PTHR11956">
    <property type="entry name" value="ARGINYL-TRNA SYNTHETASE"/>
    <property type="match status" value="1"/>
</dbReference>
<dbReference type="Pfam" id="PF03485">
    <property type="entry name" value="Arg_tRNA_synt_N"/>
    <property type="match status" value="1"/>
</dbReference>
<dbReference type="Pfam" id="PF05746">
    <property type="entry name" value="DALR_1"/>
    <property type="match status" value="1"/>
</dbReference>
<dbReference type="Pfam" id="PF00750">
    <property type="entry name" value="tRNA-synt_1d"/>
    <property type="match status" value="1"/>
</dbReference>
<dbReference type="PRINTS" id="PR01038">
    <property type="entry name" value="TRNASYNTHARG"/>
</dbReference>
<dbReference type="SMART" id="SM01016">
    <property type="entry name" value="Arg_tRNA_synt_N"/>
    <property type="match status" value="1"/>
</dbReference>
<dbReference type="SMART" id="SM00836">
    <property type="entry name" value="DALR_1"/>
    <property type="match status" value="1"/>
</dbReference>
<dbReference type="SUPFAM" id="SSF47323">
    <property type="entry name" value="Anticodon-binding domain of a subclass of class I aminoacyl-tRNA synthetases"/>
    <property type="match status" value="1"/>
</dbReference>
<dbReference type="SUPFAM" id="SSF55190">
    <property type="entry name" value="Arginyl-tRNA synthetase (ArgRS), N-terminal 'additional' domain"/>
    <property type="match status" value="1"/>
</dbReference>
<dbReference type="SUPFAM" id="SSF52374">
    <property type="entry name" value="Nucleotidylyl transferase"/>
    <property type="match status" value="1"/>
</dbReference>
<dbReference type="PROSITE" id="PS00178">
    <property type="entry name" value="AA_TRNA_LIGASE_I"/>
    <property type="match status" value="1"/>
</dbReference>
<reference key="1">
    <citation type="journal article" date="2004" name="Nat. Biotechnol.">
        <title>The genome sequence of the capnophilic rumen bacterium Mannheimia succiniciproducens.</title>
        <authorList>
            <person name="Hong S.H."/>
            <person name="Kim J.S."/>
            <person name="Lee S.Y."/>
            <person name="In Y.H."/>
            <person name="Choi S.S."/>
            <person name="Rih J.-K."/>
            <person name="Kim C.H."/>
            <person name="Jeong H."/>
            <person name="Hur C.G."/>
            <person name="Kim J.J."/>
        </authorList>
    </citation>
    <scope>NUCLEOTIDE SEQUENCE [LARGE SCALE GENOMIC DNA]</scope>
    <source>
        <strain>KCTC 0769BP / MBEL55E</strain>
    </source>
</reference>
<evidence type="ECO:0000255" key="1">
    <source>
        <dbReference type="HAMAP-Rule" id="MF_00123"/>
    </source>
</evidence>
<proteinExistence type="inferred from homology"/>
<organism>
    <name type="scientific">Mannheimia succiniciproducens (strain KCTC 0769BP / MBEL55E)</name>
    <dbReference type="NCBI Taxonomy" id="221988"/>
    <lineage>
        <taxon>Bacteria</taxon>
        <taxon>Pseudomonadati</taxon>
        <taxon>Pseudomonadota</taxon>
        <taxon>Gammaproteobacteria</taxon>
        <taxon>Pasteurellales</taxon>
        <taxon>Pasteurellaceae</taxon>
        <taxon>Basfia</taxon>
    </lineage>
</organism>
<keyword id="KW-0030">Aminoacyl-tRNA synthetase</keyword>
<keyword id="KW-0067">ATP-binding</keyword>
<keyword id="KW-0963">Cytoplasm</keyword>
<keyword id="KW-0436">Ligase</keyword>
<keyword id="KW-0547">Nucleotide-binding</keyword>
<keyword id="KW-0648">Protein biosynthesis</keyword>
<comment type="catalytic activity">
    <reaction evidence="1">
        <text>tRNA(Arg) + L-arginine + ATP = L-arginyl-tRNA(Arg) + AMP + diphosphate</text>
        <dbReference type="Rhea" id="RHEA:20301"/>
        <dbReference type="Rhea" id="RHEA-COMP:9658"/>
        <dbReference type="Rhea" id="RHEA-COMP:9673"/>
        <dbReference type="ChEBI" id="CHEBI:30616"/>
        <dbReference type="ChEBI" id="CHEBI:32682"/>
        <dbReference type="ChEBI" id="CHEBI:33019"/>
        <dbReference type="ChEBI" id="CHEBI:78442"/>
        <dbReference type="ChEBI" id="CHEBI:78513"/>
        <dbReference type="ChEBI" id="CHEBI:456215"/>
        <dbReference type="EC" id="6.1.1.19"/>
    </reaction>
</comment>
<comment type="subunit">
    <text evidence="1">Monomer.</text>
</comment>
<comment type="subcellular location">
    <subcellularLocation>
        <location evidence="1">Cytoplasm</location>
    </subcellularLocation>
</comment>
<comment type="similarity">
    <text evidence="1">Belongs to the class-I aminoacyl-tRNA synthetase family.</text>
</comment>
<accession>Q65SX3</accession>
<sequence>MNIQWILSDKIKRAMIAAGAEQNAEPLVRQSGKPQFGDYQANGIMGAAKKLGLNPREFAQKVLEQVDLSDIAEKTEIAGPGFINIFLNKNWVAQQADTALNTPNFGIKTAHPQTVVIDYSSPNVAKEMHVGHLRSTIIGDAVARALEFMGNHVIRANHVGDWGTQFGMLIAYLEKMENEHADAMQLSDLEAFYRAAKETYDNDEEFAVKARSYVVKLQSGDEYCRTMWKKLVDMTMQQNQRNYERLNVTLTEKDVMGESLYNPMLPAIVEDLKKQGLAVEDDGALVVYLDEFKNKDGDPMGVIVQKKDGGFLYTTTDIAAAKYRYHTLHADRALVFSDTRQSQHMQQAWLITRKAGYVPDSFSLEHHNFGMMLGKDGKPFKTRSGGTVKLADLLDEAVERATLLINEKNTALSEQEKAAVIEAVAIGSVKYADLSKNRTTDYVFDWDNMLSFEGNTAPYMQYAYTRIRSIFNKTDVNPTALSAAHIEIRNDKERALAIKLLQFEEAVQTVAKDGTPHILCNYLYELAGVFSSFYEHCPILNAEEPVKLSRLKLAKLTEKTLKQGLDLLGIKTVEKM</sequence>